<proteinExistence type="inferred from homology"/>
<comment type="function">
    <text evidence="1">Regulates mitochondrial small subunit maturation by controlling 15S rRNA 5'-end processing. Localizes to the 5' precursor of the 15S rRNA in a position that is subsequently occupied by mS47 in the mature yeast mtSSU. Uses structure and sequence-specific RNA recognition, binding to a single-stranded region of the precursor and specifically recognizing bases -6 to -1. The exchange of Ccm1 for mS47 is coupled to the irreversible removal of precursor rRNA that is accompanied by conformational changes of the mitoribosomal proteins uS5m and mS26. These conformational changes signal completion of 5'-end rRNA processing through protection of the mature 5'-end of the 15S rRNA and stabilization of mS47. The removal of the 5' precursor together with the dissociation of Ccm1 may be catalyzed by the 5'-3' exoribonuclease Pet127. Involved in the specific removal of group I introns in mitochondrial encoded transcripts.</text>
</comment>
<comment type="subunit">
    <text evidence="1">Binds to mitochondrial small subunit 15S rRNA.</text>
</comment>
<comment type="subcellular location">
    <subcellularLocation>
        <location evidence="1">Mitochondrion</location>
    </subcellularLocation>
</comment>
<comment type="miscellaneous">
    <text evidence="1">Involved in mitochondrial-nuclear incompatibility, a major determinant in reproductive isolation between species, through hybrid incompatibility of Ccm1 and its interacting partner 15S rRNA between yeast species.</text>
</comment>
<comment type="similarity">
    <text evidence="4">Belongs to the CCM1 family.</text>
</comment>
<reference key="1">
    <citation type="journal article" date="2007" name="Proc. Natl. Acad. Sci. U.S.A.">
        <title>Independent sorting-out of thousands of duplicated gene pairs in two yeast species descended from a whole-genome duplication.</title>
        <authorList>
            <person name="Scannell D.R."/>
            <person name="Frank A.C."/>
            <person name="Conant G.C."/>
            <person name="Byrne K.P."/>
            <person name="Woolfit M."/>
            <person name="Wolfe K.H."/>
        </authorList>
    </citation>
    <scope>NUCLEOTIDE SEQUENCE [LARGE SCALE GENOMIC DNA]</scope>
    <source>
        <strain>ATCC 22028 / DSM 70294 / BCRC 21397 / CBS 2163 / NBRC 10782 / NRRL Y-8283 / UCD 57-17</strain>
    </source>
</reference>
<evidence type="ECO:0000250" key="1">
    <source>
        <dbReference type="UniProtKB" id="P48237"/>
    </source>
</evidence>
<evidence type="ECO:0000255" key="2"/>
<evidence type="ECO:0000255" key="3">
    <source>
        <dbReference type="PROSITE-ProRule" id="PRU00708"/>
    </source>
</evidence>
<evidence type="ECO:0000305" key="4"/>
<sequence length="867" mass="100099">MLRYTRNYRLHNVASSLILKRTAIIPSLQGLRRGNFSQDDTTNLNNKKRRKRKVTSISLDDLNSVNLKKVNTKELEFKVRQLKEFTKNLKAQIKRSESRNEKRETEDDIDLEEINKDADSVFENLSNHERRKNHKVQNHLGIPIGNSQNQSTNLSSLILGSSLEQAQKFLPSTLVTRLNDNNLVLKCLTDKTRQNWNPIIKSISKNREGLNGIGKNKLNSTLLSSVKGLYFDNIERLDKMLLEYVDNDITKFTTEMYLSLFENLSNIKLTDPNMSNEVIVKMKELLERYDEALIKGTDTKMTQYILNNGIKFASKLNNHEHMEYFLTKFKGYGIIPNRINYTTVLQYYIRMGISKKSWDIFDTMKFLSKEHAPDLIAYNSVLTLCSRDKDYSKALDIYNEMVNSGINPGTSTRTIMAKILAIASRDSFTSEGKSESLRLLGWKFIHEIIETTGSKLSHKSLESMIALAAYDGDVGMSRALYHCYVTTKYRNVVQNWVGKRDYVKIWKSVLDPRMLNYLFLAYSNYNSNKLPLLLGYEQGILLRRNIINSVDYSGRSEFDDDLGVLLPFLPVTEIKHNWELLAESRAIWHFNLEYGGSTSLRSTSESIVDKSTIMTAVENSKTIDDFKWNIFSKIHELKSQTINTDVLNSIVLNTYLTIPIKLHDKKEFVLRLKEFTFQQHDFDSKIESFYLESNNKMVEDNDKNSSSPSTSEDTSIELAEDPNDLLAHYILSLKHKILANCSTYELTMKAASKFNDIKLATEAWEERGKFRKSSSFQKLAQNNRMESDTKFAELMVAFFSSQKMYTDALHVVMSSKRYIDWKYPMVKNLHRGLLEIEDSRSIDILLDIVNRKSKVQTIEETISSLTL</sequence>
<gene>
    <name type="primary">CCM1</name>
    <name type="ORF">Kpol_1051p2</name>
</gene>
<accession>A7TMW6</accession>
<keyword id="KW-0496">Mitochondrion</keyword>
<keyword id="KW-0507">mRNA processing</keyword>
<keyword id="KW-0508">mRNA splicing</keyword>
<keyword id="KW-1185">Reference proteome</keyword>
<keyword id="KW-0677">Repeat</keyword>
<keyword id="KW-0809">Transit peptide</keyword>
<organism>
    <name type="scientific">Vanderwaltozyma polyspora (strain ATCC 22028 / DSM 70294 / BCRC 21397 / CBS 2163 / NBRC 10782 / NRRL Y-8283 / UCD 57-17)</name>
    <name type="common">Kluyveromyces polysporus</name>
    <dbReference type="NCBI Taxonomy" id="436907"/>
    <lineage>
        <taxon>Eukaryota</taxon>
        <taxon>Fungi</taxon>
        <taxon>Dikarya</taxon>
        <taxon>Ascomycota</taxon>
        <taxon>Saccharomycotina</taxon>
        <taxon>Saccharomycetes</taxon>
        <taxon>Saccharomycetales</taxon>
        <taxon>Saccharomycetaceae</taxon>
        <taxon>Vanderwaltozyma</taxon>
    </lineage>
</organism>
<dbReference type="EMBL" id="DS480426">
    <property type="protein sequence ID" value="EDO16354.1"/>
    <property type="molecule type" value="Genomic_DNA"/>
</dbReference>
<dbReference type="RefSeq" id="XP_001644212.1">
    <property type="nucleotide sequence ID" value="XM_001644162.1"/>
</dbReference>
<dbReference type="SMR" id="A7TMW6"/>
<dbReference type="FunCoup" id="A7TMW6">
    <property type="interactions" value="134"/>
</dbReference>
<dbReference type="STRING" id="436907.A7TMW6"/>
<dbReference type="GeneID" id="5544517"/>
<dbReference type="KEGG" id="vpo:Kpol_1051p2"/>
<dbReference type="eggNOG" id="ENOG502QUX2">
    <property type="taxonomic scope" value="Eukaryota"/>
</dbReference>
<dbReference type="HOGENOM" id="CLU_334653_0_0_1"/>
<dbReference type="InParanoid" id="A7TMW6"/>
<dbReference type="OMA" id="ESSAIWA"/>
<dbReference type="OrthoDB" id="185373at2759"/>
<dbReference type="PhylomeDB" id="A7TMW6"/>
<dbReference type="Proteomes" id="UP000000267">
    <property type="component" value="Unassembled WGS sequence"/>
</dbReference>
<dbReference type="GO" id="GO:0005739">
    <property type="term" value="C:mitochondrion"/>
    <property type="evidence" value="ECO:0007669"/>
    <property type="project" value="UniProtKB-SubCell"/>
</dbReference>
<dbReference type="GO" id="GO:0019843">
    <property type="term" value="F:rRNA binding"/>
    <property type="evidence" value="ECO:0007669"/>
    <property type="project" value="EnsemblFungi"/>
</dbReference>
<dbReference type="GO" id="GO:0000002">
    <property type="term" value="P:mitochondrial genome maintenance"/>
    <property type="evidence" value="ECO:0007669"/>
    <property type="project" value="EnsemblFungi"/>
</dbReference>
<dbReference type="GO" id="GO:0000963">
    <property type="term" value="P:mitochondrial RNA processing"/>
    <property type="evidence" value="ECO:0007669"/>
    <property type="project" value="EnsemblFungi"/>
</dbReference>
<dbReference type="GO" id="GO:0006397">
    <property type="term" value="P:mRNA processing"/>
    <property type="evidence" value="ECO:0007669"/>
    <property type="project" value="UniProtKB-KW"/>
</dbReference>
<dbReference type="GO" id="GO:2000234">
    <property type="term" value="P:positive regulation of rRNA processing"/>
    <property type="evidence" value="ECO:0007669"/>
    <property type="project" value="EnsemblFungi"/>
</dbReference>
<dbReference type="GO" id="GO:0008380">
    <property type="term" value="P:RNA splicing"/>
    <property type="evidence" value="ECO:0007669"/>
    <property type="project" value="UniProtKB-KW"/>
</dbReference>
<dbReference type="GO" id="GO:0016072">
    <property type="term" value="P:rRNA metabolic process"/>
    <property type="evidence" value="ECO:0007669"/>
    <property type="project" value="EnsemblFungi"/>
</dbReference>
<dbReference type="Gene3D" id="1.25.40.10">
    <property type="entry name" value="Tetratricopeptide repeat domain"/>
    <property type="match status" value="1"/>
</dbReference>
<dbReference type="InterPro" id="IPR002885">
    <property type="entry name" value="Pentatricopeptide_rpt"/>
</dbReference>
<dbReference type="InterPro" id="IPR011990">
    <property type="entry name" value="TPR-like_helical_dom_sf"/>
</dbReference>
<dbReference type="NCBIfam" id="TIGR00756">
    <property type="entry name" value="PPR"/>
    <property type="match status" value="1"/>
</dbReference>
<dbReference type="PANTHER" id="PTHR47936:SF1">
    <property type="entry name" value="PENTATRICOPEPTIDE REPEAT-CONTAINING PROTEIN GUN1, CHLOROPLASTIC"/>
    <property type="match status" value="1"/>
</dbReference>
<dbReference type="PANTHER" id="PTHR47936">
    <property type="entry name" value="PPR_LONG DOMAIN-CONTAINING PROTEIN"/>
    <property type="match status" value="1"/>
</dbReference>
<dbReference type="Pfam" id="PF13041">
    <property type="entry name" value="PPR_2"/>
    <property type="match status" value="1"/>
</dbReference>
<dbReference type="PROSITE" id="PS51375">
    <property type="entry name" value="PPR"/>
    <property type="match status" value="2"/>
</dbReference>
<name>CCM1_VANPO</name>
<protein>
    <recommendedName>
        <fullName>Mitochondrial 15S rRNA processing factor CCM1</fullName>
    </recommendedName>
</protein>
<feature type="transit peptide" description="Mitochondrion" evidence="2">
    <location>
        <begin position="1"/>
        <end position="96"/>
    </location>
</feature>
<feature type="chain" id="PRO_0000402269" description="Mitochondrial 15S rRNA processing factor CCM1" evidence="2">
    <location>
        <begin position="97"/>
        <end position="867"/>
    </location>
</feature>
<feature type="repeat" description="PPR 1" evidence="3">
    <location>
        <begin position="337"/>
        <end position="371"/>
    </location>
</feature>
<feature type="repeat" description="PPR 2" evidence="3">
    <location>
        <begin position="374"/>
        <end position="408"/>
    </location>
</feature>